<accession>P56446</accession>
<organism>
    <name type="scientific">Dama dama</name>
    <name type="common">Fallow deer</name>
    <name type="synonym">Cervus dama</name>
    <dbReference type="NCBI Taxonomy" id="30532"/>
    <lineage>
        <taxon>Eukaryota</taxon>
        <taxon>Metazoa</taxon>
        <taxon>Chordata</taxon>
        <taxon>Craniata</taxon>
        <taxon>Vertebrata</taxon>
        <taxon>Euteleostomi</taxon>
        <taxon>Mammalia</taxon>
        <taxon>Eutheria</taxon>
        <taxon>Laurasiatheria</taxon>
        <taxon>Artiodactyla</taxon>
        <taxon>Ruminantia</taxon>
        <taxon>Pecora</taxon>
        <taxon>Cervidae</taxon>
        <taxon>Cervinae</taxon>
        <taxon>Dama</taxon>
    </lineage>
</organism>
<gene>
    <name type="primary">MC1R</name>
    <name type="synonym">MSHR</name>
</gene>
<reference key="1">
    <citation type="journal article" date="1999" name="Hereditas">
        <title>The melanocyte-stimulating hormone receptor (MC1-R) gene as a tool in evolutionary studies of artiodactyles.</title>
        <authorList>
            <person name="Klungland H."/>
            <person name="Roed K.H."/>
            <person name="Nesbo C.L."/>
            <person name="Jakobsen K.S."/>
            <person name="Vage D.I."/>
        </authorList>
    </citation>
    <scope>NUCLEOTIDE SEQUENCE [GENOMIC DNA]</scope>
</reference>
<evidence type="ECO:0000250" key="1">
    <source>
        <dbReference type="UniProtKB" id="Q01726"/>
    </source>
</evidence>
<evidence type="ECO:0000255" key="2"/>
<evidence type="ECO:0000255" key="3">
    <source>
        <dbReference type="PROSITE-ProRule" id="PRU00521"/>
    </source>
</evidence>
<feature type="chain" id="PRO_0000069809" description="Melanocyte-stimulating hormone receptor">
    <location>
        <begin position="1"/>
        <end position="317"/>
    </location>
</feature>
<feature type="topological domain" description="Extracellular" evidence="2">
    <location>
        <begin position="1"/>
        <end position="37"/>
    </location>
</feature>
<feature type="transmembrane region" description="Helical; Name=1" evidence="2">
    <location>
        <begin position="38"/>
        <end position="63"/>
    </location>
</feature>
<feature type="topological domain" description="Cytoplasmic" evidence="2">
    <location>
        <begin position="64"/>
        <end position="72"/>
    </location>
</feature>
<feature type="transmembrane region" description="Helical; Name=2" evidence="2">
    <location>
        <begin position="73"/>
        <end position="93"/>
    </location>
</feature>
<feature type="topological domain" description="Extracellular" evidence="2">
    <location>
        <begin position="94"/>
        <end position="118"/>
    </location>
</feature>
<feature type="transmembrane region" description="Helical; Name=3" evidence="2">
    <location>
        <begin position="119"/>
        <end position="140"/>
    </location>
</feature>
<feature type="topological domain" description="Cytoplasmic" evidence="2">
    <location>
        <begin position="141"/>
        <end position="163"/>
    </location>
</feature>
<feature type="transmembrane region" description="Helical; Name=4" evidence="2">
    <location>
        <begin position="164"/>
        <end position="183"/>
    </location>
</feature>
<feature type="topological domain" description="Extracellular" evidence="2">
    <location>
        <begin position="184"/>
        <end position="191"/>
    </location>
</feature>
<feature type="transmembrane region" description="Helical; Name=5" evidence="2">
    <location>
        <begin position="192"/>
        <end position="211"/>
    </location>
</feature>
<feature type="topological domain" description="Cytoplasmic" evidence="2">
    <location>
        <begin position="212"/>
        <end position="240"/>
    </location>
</feature>
<feature type="transmembrane region" description="Helical; Name=6" evidence="2">
    <location>
        <begin position="241"/>
        <end position="266"/>
    </location>
</feature>
<feature type="topological domain" description="Extracellular" evidence="2">
    <location>
        <begin position="267"/>
        <end position="279"/>
    </location>
</feature>
<feature type="transmembrane region" description="Helical; Name=7" evidence="2">
    <location>
        <begin position="280"/>
        <end position="300"/>
    </location>
</feature>
<feature type="topological domain" description="Cytoplasmic" evidence="2">
    <location>
        <begin position="301"/>
        <end position="317"/>
    </location>
</feature>
<feature type="lipid moiety-binding region" description="S-palmitoyl cysteine" evidence="2">
    <location>
        <position position="315"/>
    </location>
</feature>
<feature type="glycosylation site" description="N-linked (GlcNAc...) asparagine" evidence="2">
    <location>
        <position position="29"/>
    </location>
</feature>
<comment type="function">
    <text evidence="1">Receptor for MSH (alpha, beta and gamma) and ACTH. The activity of this receptor is mediated by G proteins which activate adenylate cyclase. Mediates melanogenesis, the production of eumelanin (black/brown) and phaeomelanin (red/yellow), via regulation of cAMP signaling in melanocytes.</text>
</comment>
<comment type="subunit">
    <text evidence="1">Interacts with MGRN1, but does not undergo MGRN1-mediated ubiquitination; this interaction competes with GNAS-binding and thus inhibits agonist-induced cAMP production. Interacts with OPN3; the interaction results in a decrease in MC1R-mediated cAMP signaling and ultimately a decrease in melanin production in melanocytes.</text>
</comment>
<comment type="subcellular location">
    <subcellularLocation>
        <location evidence="1">Cell membrane</location>
        <topology evidence="2">Multi-pass membrane protein</topology>
    </subcellularLocation>
</comment>
<comment type="similarity">
    <text evidence="3">Belongs to the G-protein coupled receptor 1 family.</text>
</comment>
<sequence length="317" mass="34911">MPVLGSQRRLLGSLNCTPPATFPLTLAPNRTGPQCLEVSIPDGLFLSLGLVSLVENVLVVAAIAKNRNLHSPMYYFICCLAMSDLLVSVSNVLETAVMLLLEAGALAAQAAVVQQLDNVIDVLICGSMVSSLCFLGAIAVDRYISIFYALRYHSVVTLPRAWRIIAAIWVASILTSLLFITYYNHTVVLLCLVGFFIAMLALMAVLYVHMLARACQHARGIARLQKRQRPIHQGFGLKGAATLTILLGVFFLCWGPFFLHLSLIVLCPQHPTCGCIFKNFNLFLALIICNAIVDPLIYAFRSQELRKTLQEVLQCSW</sequence>
<keyword id="KW-1003">Cell membrane</keyword>
<keyword id="KW-0297">G-protein coupled receptor</keyword>
<keyword id="KW-0325">Glycoprotein</keyword>
<keyword id="KW-0449">Lipoprotein</keyword>
<keyword id="KW-0472">Membrane</keyword>
<keyword id="KW-0564">Palmitate</keyword>
<keyword id="KW-0675">Receptor</keyword>
<keyword id="KW-0807">Transducer</keyword>
<keyword id="KW-0812">Transmembrane</keyword>
<keyword id="KW-1133">Transmembrane helix</keyword>
<protein>
    <recommendedName>
        <fullName>Melanocyte-stimulating hormone receptor</fullName>
        <shortName>MSH-R</shortName>
    </recommendedName>
    <alternativeName>
        <fullName>Melanocortin receptor 1</fullName>
        <shortName>MC1-R</shortName>
    </alternativeName>
</protein>
<name>MSHR_DAMDA</name>
<proteinExistence type="inferred from homology"/>
<dbReference type="EMBL" id="Y13963">
    <property type="protein sequence ID" value="CAA74297.1"/>
    <property type="molecule type" value="Genomic_DNA"/>
</dbReference>
<dbReference type="SMR" id="P56446"/>
<dbReference type="GlyCosmos" id="P56446">
    <property type="glycosylation" value="1 site, No reported glycans"/>
</dbReference>
<dbReference type="GO" id="GO:0005886">
    <property type="term" value="C:plasma membrane"/>
    <property type="evidence" value="ECO:0000250"/>
    <property type="project" value="UniProtKB"/>
</dbReference>
<dbReference type="GO" id="GO:0004980">
    <property type="term" value="F:melanocyte-stimulating hormone receptor activity"/>
    <property type="evidence" value="ECO:0007669"/>
    <property type="project" value="InterPro"/>
</dbReference>
<dbReference type="FunFam" id="1.20.1070.10:FF:000211">
    <property type="entry name" value="Melanocyte-stimulating hormone receptor"/>
    <property type="match status" value="1"/>
</dbReference>
<dbReference type="Gene3D" id="1.20.1070.10">
    <property type="entry name" value="Rhodopsin 7-helix transmembrane proteins"/>
    <property type="match status" value="1"/>
</dbReference>
<dbReference type="InterPro" id="IPR000276">
    <property type="entry name" value="GPCR_Rhodpsn"/>
</dbReference>
<dbReference type="InterPro" id="IPR017452">
    <property type="entry name" value="GPCR_Rhodpsn_7TM"/>
</dbReference>
<dbReference type="InterPro" id="IPR001671">
    <property type="entry name" value="Melcrt_ACTH_rcpt"/>
</dbReference>
<dbReference type="InterPro" id="IPR000761">
    <property type="entry name" value="MSH_rcpt"/>
</dbReference>
<dbReference type="PANTHER" id="PTHR22750">
    <property type="entry name" value="G-PROTEIN COUPLED RECEPTOR"/>
    <property type="match status" value="1"/>
</dbReference>
<dbReference type="Pfam" id="PF00001">
    <property type="entry name" value="7tm_1"/>
    <property type="match status" value="1"/>
</dbReference>
<dbReference type="PRINTS" id="PR00237">
    <property type="entry name" value="GPCRRHODOPSN"/>
</dbReference>
<dbReference type="PRINTS" id="PR00534">
    <property type="entry name" value="MCRFAMILY"/>
</dbReference>
<dbReference type="PRINTS" id="PR00536">
    <property type="entry name" value="MELNOCYTESHR"/>
</dbReference>
<dbReference type="SMART" id="SM01381">
    <property type="entry name" value="7TM_GPCR_Srsx"/>
    <property type="match status" value="1"/>
</dbReference>
<dbReference type="SUPFAM" id="SSF81321">
    <property type="entry name" value="Family A G protein-coupled receptor-like"/>
    <property type="match status" value="1"/>
</dbReference>
<dbReference type="PROSITE" id="PS00237">
    <property type="entry name" value="G_PROTEIN_RECEP_F1_1"/>
    <property type="match status" value="1"/>
</dbReference>
<dbReference type="PROSITE" id="PS50262">
    <property type="entry name" value="G_PROTEIN_RECEP_F1_2"/>
    <property type="match status" value="1"/>
</dbReference>